<protein>
    <recommendedName>
        <fullName>Protein FAM117B</fullName>
    </recommendedName>
    <alternativeName>
        <fullName>Amyotrophic lateral sclerosis 2 chromosomal region candidate gene 13 protein</fullName>
    </alternativeName>
</protein>
<name>F117B_HUMAN</name>
<sequence length="589" mass="61968">MSQRVRRNGSPTPAGSLGGGAVATAGGPGSRLQPMRATVPFQLKQQQQQQHGSPTRSGGGGGGNNNGGCCGGASGPAGGGGGGGPRTASRSTSPTRGGGNAAARTSPTVATQTGASATSTRGTSPTRSAAPGARGSPPRPPPPPPLLGTVSSPSSSPTHLWTGEVSAAPPPARVRHRRRSPEQSRSSPEKRSPSAPVCKAGDKTRQPSSSPSSIIRRTSSLDTLAAPYLAGHWPRDSHGQAAPCMRDKATQTESAWAEEYSEKKKGSHKRSASWGSTDQLKEIAKLRQQLQRSKHSSRHHRDKERQSPFHGNHAAINQCQAPVPKSALIPVIPITKSTGSRFRNSVEGLNQEIEIIIKETGEKEEQLIPQDIPDGHRAPPPLVQRSSSTRSIDTQTPGGADRGSNNSSRSQSVSPTSFLTISNEGSEESPCSADDLLVDPRDKENGNNSPLPKYATSPKPNNSYMFKREPPEGCERVKVFEECSPKQLHEIPAFYCPDKNKVNFIPKSGSAFCLVSILKPLLPTPDLTLKGSGHSLTVTTGMTTTLLQPIAVASLSTNTEQDRVSRGTSTVMPSASLLPPPEPIEEAEG</sequence>
<accession>Q6P1L5</accession>
<accession>Q53QZ5</accession>
<accession>Q585T9</accession>
<accession>Q8N8W1</accession>
<accession>Q96Q34</accession>
<feature type="chain" id="PRO_0000299533" description="Protein FAM117B">
    <location>
        <begin position="1"/>
        <end position="589"/>
    </location>
</feature>
<feature type="region of interest" description="Disordered" evidence="2">
    <location>
        <begin position="1"/>
        <end position="310"/>
    </location>
</feature>
<feature type="region of interest" description="Disordered" evidence="2">
    <location>
        <begin position="370"/>
        <end position="464"/>
    </location>
</feature>
<feature type="region of interest" description="Disordered" evidence="2">
    <location>
        <begin position="556"/>
        <end position="589"/>
    </location>
</feature>
<feature type="compositionally biased region" description="Gly residues" evidence="2">
    <location>
        <begin position="16"/>
        <end position="29"/>
    </location>
</feature>
<feature type="compositionally biased region" description="Low complexity" evidence="2">
    <location>
        <begin position="45"/>
        <end position="56"/>
    </location>
</feature>
<feature type="compositionally biased region" description="Gly residues" evidence="2">
    <location>
        <begin position="57"/>
        <end position="85"/>
    </location>
</feature>
<feature type="compositionally biased region" description="Low complexity" evidence="2">
    <location>
        <begin position="108"/>
        <end position="136"/>
    </location>
</feature>
<feature type="compositionally biased region" description="Pro residues" evidence="2">
    <location>
        <begin position="137"/>
        <end position="146"/>
    </location>
</feature>
<feature type="compositionally biased region" description="Low complexity" evidence="2">
    <location>
        <begin position="147"/>
        <end position="158"/>
    </location>
</feature>
<feature type="compositionally biased region" description="Low complexity" evidence="2">
    <location>
        <begin position="207"/>
        <end position="220"/>
    </location>
</feature>
<feature type="compositionally biased region" description="Basic residues" evidence="2">
    <location>
        <begin position="292"/>
        <end position="302"/>
    </location>
</feature>
<feature type="compositionally biased region" description="Polar residues" evidence="2">
    <location>
        <begin position="384"/>
        <end position="397"/>
    </location>
</feature>
<feature type="compositionally biased region" description="Low complexity" evidence="2">
    <location>
        <begin position="404"/>
        <end position="417"/>
    </location>
</feature>
<feature type="modified residue" description="Phosphoserine" evidence="7">
    <location>
        <position position="10"/>
    </location>
</feature>
<feature type="modified residue" description="Phosphoserine" evidence="1">
    <location>
        <position position="106"/>
    </location>
</feature>
<feature type="modified residue" description="Phosphoserine" evidence="7">
    <location>
        <position position="210"/>
    </location>
</feature>
<feature type="modified residue" description="Phosphoserine" evidence="5">
    <location>
        <position position="219"/>
    </location>
</feature>
<feature type="modified residue" description="Phosphoserine" evidence="7">
    <location>
        <position position="220"/>
    </location>
</feature>
<feature type="modified residue" description="Phosphoserine" evidence="7">
    <location>
        <position position="273"/>
    </location>
</feature>
<feature type="modified residue" description="Phosphoserine" evidence="1">
    <location>
        <position position="345"/>
    </location>
</feature>
<feature type="modified residue" description="Phosphoserine" evidence="6">
    <location>
        <position position="391"/>
    </location>
</feature>
<feature type="modified residue" description="Phosphoserine" evidence="1">
    <location>
        <position position="449"/>
    </location>
</feature>
<feature type="modified residue" description="Phosphoserine" evidence="7">
    <location>
        <position position="457"/>
    </location>
</feature>
<feature type="splice variant" id="VSP_027729" description="In isoform 2." evidence="3">
    <original>IAKLRQQ</original>
    <variation>VRKMVLR</variation>
    <location>
        <begin position="283"/>
        <end position="289"/>
    </location>
</feature>
<feature type="splice variant" id="VSP_027730" description="In isoform 2." evidence="3">
    <location>
        <begin position="290"/>
        <end position="589"/>
    </location>
</feature>
<feature type="sequence conflict" description="In Ref. 3; BAB69023." evidence="4" ref="3">
    <original>A</original>
    <variation>V</variation>
    <location>
        <position position="168"/>
    </location>
</feature>
<proteinExistence type="evidence at protein level"/>
<dbReference type="EMBL" id="AC009960">
    <property type="protein sequence ID" value="AAX76518.1"/>
    <property type="status" value="ALT_SEQ"/>
    <property type="molecule type" value="Genomic_DNA"/>
</dbReference>
<dbReference type="EMBL" id="AC098831">
    <property type="protein sequence ID" value="AAY24090.1"/>
    <property type="molecule type" value="Genomic_DNA"/>
</dbReference>
<dbReference type="EMBL" id="AB053315">
    <property type="protein sequence ID" value="BAB69023.1"/>
    <property type="status" value="ALT_SEQ"/>
    <property type="molecule type" value="mRNA"/>
</dbReference>
<dbReference type="EMBL" id="AK096090">
    <property type="protein sequence ID" value="BAC04700.1"/>
    <property type="status" value="ALT_INIT"/>
    <property type="molecule type" value="mRNA"/>
</dbReference>
<dbReference type="EMBL" id="BC065010">
    <property type="protein sequence ID" value="AAH65010.1"/>
    <property type="molecule type" value="mRNA"/>
</dbReference>
<dbReference type="EMBL" id="BC106906">
    <property type="protein sequence ID" value="AAI06907.1"/>
    <property type="status" value="ALT_INIT"/>
    <property type="molecule type" value="mRNA"/>
</dbReference>
<dbReference type="EMBL" id="BC106907">
    <property type="protein sequence ID" value="AAI06908.1"/>
    <property type="status" value="ALT_INIT"/>
    <property type="molecule type" value="mRNA"/>
</dbReference>
<dbReference type="CCDS" id="CCDS33362.2">
    <molecule id="Q6P1L5-1"/>
</dbReference>
<dbReference type="RefSeq" id="NP_775782.2">
    <molecule id="Q6P1L5-1"/>
    <property type="nucleotide sequence ID" value="NM_173511.4"/>
</dbReference>
<dbReference type="SMR" id="Q6P1L5"/>
<dbReference type="BioGRID" id="127329">
    <property type="interactions" value="44"/>
</dbReference>
<dbReference type="FunCoup" id="Q6P1L5">
    <property type="interactions" value="1641"/>
</dbReference>
<dbReference type="IntAct" id="Q6P1L5">
    <property type="interactions" value="55"/>
</dbReference>
<dbReference type="MINT" id="Q6P1L5"/>
<dbReference type="STRING" id="9606.ENSP00000376071"/>
<dbReference type="GlyCosmos" id="Q6P1L5">
    <property type="glycosylation" value="1 site, 1 glycan"/>
</dbReference>
<dbReference type="GlyGen" id="Q6P1L5">
    <property type="glycosylation" value="3 sites, 1 N-linked glycan (1 site), 1 O-linked glycan (1 site)"/>
</dbReference>
<dbReference type="iPTMnet" id="Q6P1L5"/>
<dbReference type="PhosphoSitePlus" id="Q6P1L5"/>
<dbReference type="BioMuta" id="FAM117B"/>
<dbReference type="DMDM" id="158563965"/>
<dbReference type="jPOST" id="Q6P1L5"/>
<dbReference type="MassIVE" id="Q6P1L5"/>
<dbReference type="PaxDb" id="9606-ENSP00000376071"/>
<dbReference type="PeptideAtlas" id="Q6P1L5"/>
<dbReference type="ProteomicsDB" id="66843">
    <molecule id="Q6P1L5-1"/>
</dbReference>
<dbReference type="ProteomicsDB" id="66844">
    <molecule id="Q6P1L5-2"/>
</dbReference>
<dbReference type="Pumba" id="Q6P1L5"/>
<dbReference type="Antibodypedia" id="1012">
    <property type="antibodies" value="137 antibodies from 23 providers"/>
</dbReference>
<dbReference type="DNASU" id="150864"/>
<dbReference type="Ensembl" id="ENST00000392238.3">
    <molecule id="Q6P1L5-1"/>
    <property type="protein sequence ID" value="ENSP00000376071.2"/>
    <property type="gene ID" value="ENSG00000138439.12"/>
</dbReference>
<dbReference type="GeneID" id="150864"/>
<dbReference type="KEGG" id="hsa:150864"/>
<dbReference type="MANE-Select" id="ENST00000392238.3">
    <property type="protein sequence ID" value="ENSP00000376071.2"/>
    <property type="RefSeq nucleotide sequence ID" value="NM_173511.4"/>
    <property type="RefSeq protein sequence ID" value="NP_775782.2"/>
</dbReference>
<dbReference type="UCSC" id="uc010zhx.3">
    <molecule id="Q6P1L5-1"/>
    <property type="organism name" value="human"/>
</dbReference>
<dbReference type="AGR" id="HGNC:14440"/>
<dbReference type="CTD" id="150864"/>
<dbReference type="DisGeNET" id="150864"/>
<dbReference type="GeneCards" id="FAM117B"/>
<dbReference type="HGNC" id="HGNC:14440">
    <property type="gene designation" value="FAM117B"/>
</dbReference>
<dbReference type="HPA" id="ENSG00000138439">
    <property type="expression patterns" value="Low tissue specificity"/>
</dbReference>
<dbReference type="neXtProt" id="NX_Q6P1L5"/>
<dbReference type="OpenTargets" id="ENSG00000138439"/>
<dbReference type="PharmGKB" id="PA164719514"/>
<dbReference type="VEuPathDB" id="HostDB:ENSG00000138439"/>
<dbReference type="eggNOG" id="ENOG502QR2I">
    <property type="taxonomic scope" value="Eukaryota"/>
</dbReference>
<dbReference type="GeneTree" id="ENSGT00950000183046"/>
<dbReference type="HOGENOM" id="CLU_033432_0_0_1"/>
<dbReference type="InParanoid" id="Q6P1L5"/>
<dbReference type="OMA" id="PREIPQF"/>
<dbReference type="OrthoDB" id="10037581at2759"/>
<dbReference type="PAN-GO" id="Q6P1L5">
    <property type="GO annotations" value="0 GO annotations based on evolutionary models"/>
</dbReference>
<dbReference type="PhylomeDB" id="Q6P1L5"/>
<dbReference type="TreeFam" id="TF333159"/>
<dbReference type="PathwayCommons" id="Q6P1L5"/>
<dbReference type="SignaLink" id="Q6P1L5"/>
<dbReference type="BioGRID-ORCS" id="150864">
    <property type="hits" value="11 hits in 1161 CRISPR screens"/>
</dbReference>
<dbReference type="ChiTaRS" id="FAM117B">
    <property type="organism name" value="human"/>
</dbReference>
<dbReference type="GenomeRNAi" id="150864"/>
<dbReference type="Pharos" id="Q6P1L5">
    <property type="development level" value="Tdark"/>
</dbReference>
<dbReference type="PRO" id="PR:Q6P1L5"/>
<dbReference type="Proteomes" id="UP000005640">
    <property type="component" value="Chromosome 2"/>
</dbReference>
<dbReference type="RNAct" id="Q6P1L5">
    <property type="molecule type" value="protein"/>
</dbReference>
<dbReference type="Bgee" id="ENSG00000138439">
    <property type="expression patterns" value="Expressed in cortical plate and 177 other cell types or tissues"/>
</dbReference>
<dbReference type="InterPro" id="IPR026642">
    <property type="entry name" value="Glcci1/FAM117"/>
</dbReference>
<dbReference type="PANTHER" id="PTHR14972">
    <property type="entry name" value="AGAP011572-PA"/>
    <property type="match status" value="1"/>
</dbReference>
<dbReference type="PANTHER" id="PTHR14972:SF6">
    <property type="entry name" value="PROTEIN FAM117B"/>
    <property type="match status" value="1"/>
</dbReference>
<dbReference type="Pfam" id="PF15388">
    <property type="entry name" value="FAM117"/>
    <property type="match status" value="1"/>
</dbReference>
<reference key="1">
    <citation type="journal article" date="2005" name="Nature">
        <title>Generation and annotation of the DNA sequences of human chromosomes 2 and 4.</title>
        <authorList>
            <person name="Hillier L.W."/>
            <person name="Graves T.A."/>
            <person name="Fulton R.S."/>
            <person name="Fulton L.A."/>
            <person name="Pepin K.H."/>
            <person name="Minx P."/>
            <person name="Wagner-McPherson C."/>
            <person name="Layman D."/>
            <person name="Wylie K."/>
            <person name="Sekhon M."/>
            <person name="Becker M.C."/>
            <person name="Fewell G.A."/>
            <person name="Delehaunty K.D."/>
            <person name="Miner T.L."/>
            <person name="Nash W.E."/>
            <person name="Kremitzki C."/>
            <person name="Oddy L."/>
            <person name="Du H."/>
            <person name="Sun H."/>
            <person name="Bradshaw-Cordum H."/>
            <person name="Ali J."/>
            <person name="Carter J."/>
            <person name="Cordes M."/>
            <person name="Harris A."/>
            <person name="Isak A."/>
            <person name="van Brunt A."/>
            <person name="Nguyen C."/>
            <person name="Du F."/>
            <person name="Courtney L."/>
            <person name="Kalicki J."/>
            <person name="Ozersky P."/>
            <person name="Abbott S."/>
            <person name="Armstrong J."/>
            <person name="Belter E.A."/>
            <person name="Caruso L."/>
            <person name="Cedroni M."/>
            <person name="Cotton M."/>
            <person name="Davidson T."/>
            <person name="Desai A."/>
            <person name="Elliott G."/>
            <person name="Erb T."/>
            <person name="Fronick C."/>
            <person name="Gaige T."/>
            <person name="Haakenson W."/>
            <person name="Haglund K."/>
            <person name="Holmes A."/>
            <person name="Harkins R."/>
            <person name="Kim K."/>
            <person name="Kruchowski S.S."/>
            <person name="Strong C.M."/>
            <person name="Grewal N."/>
            <person name="Goyea E."/>
            <person name="Hou S."/>
            <person name="Levy A."/>
            <person name="Martinka S."/>
            <person name="Mead K."/>
            <person name="McLellan M.D."/>
            <person name="Meyer R."/>
            <person name="Randall-Maher J."/>
            <person name="Tomlinson C."/>
            <person name="Dauphin-Kohlberg S."/>
            <person name="Kozlowicz-Reilly A."/>
            <person name="Shah N."/>
            <person name="Swearengen-Shahid S."/>
            <person name="Snider J."/>
            <person name="Strong J.T."/>
            <person name="Thompson J."/>
            <person name="Yoakum M."/>
            <person name="Leonard S."/>
            <person name="Pearman C."/>
            <person name="Trani L."/>
            <person name="Radionenko M."/>
            <person name="Waligorski J.E."/>
            <person name="Wang C."/>
            <person name="Rock S.M."/>
            <person name="Tin-Wollam A.-M."/>
            <person name="Maupin R."/>
            <person name="Latreille P."/>
            <person name="Wendl M.C."/>
            <person name="Yang S.-P."/>
            <person name="Pohl C."/>
            <person name="Wallis J.W."/>
            <person name="Spieth J."/>
            <person name="Bieri T.A."/>
            <person name="Berkowicz N."/>
            <person name="Nelson J.O."/>
            <person name="Osborne J."/>
            <person name="Ding L."/>
            <person name="Meyer R."/>
            <person name="Sabo A."/>
            <person name="Shotland Y."/>
            <person name="Sinha P."/>
            <person name="Wohldmann P.E."/>
            <person name="Cook L.L."/>
            <person name="Hickenbotham M.T."/>
            <person name="Eldred J."/>
            <person name="Williams D."/>
            <person name="Jones T.A."/>
            <person name="She X."/>
            <person name="Ciccarelli F.D."/>
            <person name="Izaurralde E."/>
            <person name="Taylor J."/>
            <person name="Schmutz J."/>
            <person name="Myers R.M."/>
            <person name="Cox D.R."/>
            <person name="Huang X."/>
            <person name="McPherson J.D."/>
            <person name="Mardis E.R."/>
            <person name="Clifton S.W."/>
            <person name="Warren W.C."/>
            <person name="Chinwalla A.T."/>
            <person name="Eddy S.R."/>
            <person name="Marra M.A."/>
            <person name="Ovcharenko I."/>
            <person name="Furey T.S."/>
            <person name="Miller W."/>
            <person name="Eichler E.E."/>
            <person name="Bork P."/>
            <person name="Suyama M."/>
            <person name="Torrents D."/>
            <person name="Waterston R.H."/>
            <person name="Wilson R.K."/>
        </authorList>
    </citation>
    <scope>NUCLEOTIDE SEQUENCE [LARGE SCALE GENOMIC DNA]</scope>
</reference>
<reference key="2">
    <citation type="journal article" date="2001" name="Nat. Genet.">
        <title>A gene encoding a putative GTPase regulator is mutated in familial amyotrophic lateral sclerosis 2.</title>
        <authorList>
            <person name="Hadano S."/>
            <person name="Hand C.K."/>
            <person name="Osuga H."/>
            <person name="Yanagisawa Y."/>
            <person name="Otomo A."/>
            <person name="Devon R.S."/>
            <person name="Miyamoto N."/>
            <person name="Showguchi-Miyata J."/>
            <person name="Okada Y."/>
            <person name="Singaraja R."/>
            <person name="Figlewicz D.A."/>
            <person name="Kwiatkowski T."/>
            <person name="Hosler B.A."/>
            <person name="Sagie T."/>
            <person name="Skaug J."/>
            <person name="Nasir J."/>
            <person name="Brown R.H. Jr."/>
            <person name="Scherer S.W."/>
            <person name="Rouleau G.A."/>
            <person name="Hayden M.R."/>
            <person name="Ikeda J.-E."/>
        </authorList>
    </citation>
    <scope>NUCLEOTIDE SEQUENCE [LARGE SCALE MRNA] OF 103-589 (ISOFORM 2)</scope>
</reference>
<reference key="3">
    <citation type="journal article" date="2004" name="Nat. Genet.">
        <title>Complete sequencing and characterization of 21,243 full-length human cDNAs.</title>
        <authorList>
            <person name="Ota T."/>
            <person name="Suzuki Y."/>
            <person name="Nishikawa T."/>
            <person name="Otsuki T."/>
            <person name="Sugiyama T."/>
            <person name="Irie R."/>
            <person name="Wakamatsu A."/>
            <person name="Hayashi K."/>
            <person name="Sato H."/>
            <person name="Nagai K."/>
            <person name="Kimura K."/>
            <person name="Makita H."/>
            <person name="Sekine M."/>
            <person name="Obayashi M."/>
            <person name="Nishi T."/>
            <person name="Shibahara T."/>
            <person name="Tanaka T."/>
            <person name="Ishii S."/>
            <person name="Yamamoto J."/>
            <person name="Saito K."/>
            <person name="Kawai Y."/>
            <person name="Isono Y."/>
            <person name="Nakamura Y."/>
            <person name="Nagahari K."/>
            <person name="Murakami K."/>
            <person name="Yasuda T."/>
            <person name="Iwayanagi T."/>
            <person name="Wagatsuma M."/>
            <person name="Shiratori A."/>
            <person name="Sudo H."/>
            <person name="Hosoiri T."/>
            <person name="Kaku Y."/>
            <person name="Kodaira H."/>
            <person name="Kondo H."/>
            <person name="Sugawara M."/>
            <person name="Takahashi M."/>
            <person name="Kanda K."/>
            <person name="Yokoi T."/>
            <person name="Furuya T."/>
            <person name="Kikkawa E."/>
            <person name="Omura Y."/>
            <person name="Abe K."/>
            <person name="Kamihara K."/>
            <person name="Katsuta N."/>
            <person name="Sato K."/>
            <person name="Tanikawa M."/>
            <person name="Yamazaki M."/>
            <person name="Ninomiya K."/>
            <person name="Ishibashi T."/>
            <person name="Yamashita H."/>
            <person name="Murakawa K."/>
            <person name="Fujimori K."/>
            <person name="Tanai H."/>
            <person name="Kimata M."/>
            <person name="Watanabe M."/>
            <person name="Hiraoka S."/>
            <person name="Chiba Y."/>
            <person name="Ishida S."/>
            <person name="Ono Y."/>
            <person name="Takiguchi S."/>
            <person name="Watanabe S."/>
            <person name="Yosida M."/>
            <person name="Hotuta T."/>
            <person name="Kusano J."/>
            <person name="Kanehori K."/>
            <person name="Takahashi-Fujii A."/>
            <person name="Hara H."/>
            <person name="Tanase T.-O."/>
            <person name="Nomura Y."/>
            <person name="Togiya S."/>
            <person name="Komai F."/>
            <person name="Hara R."/>
            <person name="Takeuchi K."/>
            <person name="Arita M."/>
            <person name="Imose N."/>
            <person name="Musashino K."/>
            <person name="Yuuki H."/>
            <person name="Oshima A."/>
            <person name="Sasaki N."/>
            <person name="Aotsuka S."/>
            <person name="Yoshikawa Y."/>
            <person name="Matsunawa H."/>
            <person name="Ichihara T."/>
            <person name="Shiohata N."/>
            <person name="Sano S."/>
            <person name="Moriya S."/>
            <person name="Momiyama H."/>
            <person name="Satoh N."/>
            <person name="Takami S."/>
            <person name="Terashima Y."/>
            <person name="Suzuki O."/>
            <person name="Nakagawa S."/>
            <person name="Senoh A."/>
            <person name="Mizoguchi H."/>
            <person name="Goto Y."/>
            <person name="Shimizu F."/>
            <person name="Wakebe H."/>
            <person name="Hishigaki H."/>
            <person name="Watanabe T."/>
            <person name="Sugiyama A."/>
            <person name="Takemoto M."/>
            <person name="Kawakami B."/>
            <person name="Yamazaki M."/>
            <person name="Watanabe K."/>
            <person name="Kumagai A."/>
            <person name="Itakura S."/>
            <person name="Fukuzumi Y."/>
            <person name="Fujimori Y."/>
            <person name="Komiyama M."/>
            <person name="Tashiro H."/>
            <person name="Tanigami A."/>
            <person name="Fujiwara T."/>
            <person name="Ono T."/>
            <person name="Yamada K."/>
            <person name="Fujii Y."/>
            <person name="Ozaki K."/>
            <person name="Hirao M."/>
            <person name="Ohmori Y."/>
            <person name="Kawabata A."/>
            <person name="Hikiji T."/>
            <person name="Kobatake N."/>
            <person name="Inagaki H."/>
            <person name="Ikema Y."/>
            <person name="Okamoto S."/>
            <person name="Okitani R."/>
            <person name="Kawakami T."/>
            <person name="Noguchi S."/>
            <person name="Itoh T."/>
            <person name="Shigeta K."/>
            <person name="Senba T."/>
            <person name="Matsumura K."/>
            <person name="Nakajima Y."/>
            <person name="Mizuno T."/>
            <person name="Morinaga M."/>
            <person name="Sasaki M."/>
            <person name="Togashi T."/>
            <person name="Oyama M."/>
            <person name="Hata H."/>
            <person name="Watanabe M."/>
            <person name="Komatsu T."/>
            <person name="Mizushima-Sugano J."/>
            <person name="Satoh T."/>
            <person name="Shirai Y."/>
            <person name="Takahashi Y."/>
            <person name="Nakagawa K."/>
            <person name="Okumura K."/>
            <person name="Nagase T."/>
            <person name="Nomura N."/>
            <person name="Kikuchi H."/>
            <person name="Masuho Y."/>
            <person name="Yamashita R."/>
            <person name="Nakai K."/>
            <person name="Yada T."/>
            <person name="Nakamura Y."/>
            <person name="Ohara O."/>
            <person name="Isogai T."/>
            <person name="Sugano S."/>
        </authorList>
    </citation>
    <scope>NUCLEOTIDE SEQUENCE [LARGE SCALE MRNA] OF 142-589 (ISOFORM 1)</scope>
    <source>
        <tissue>Kidney</tissue>
    </source>
</reference>
<reference key="4">
    <citation type="journal article" date="2004" name="Genome Res.">
        <title>The status, quality, and expansion of the NIH full-length cDNA project: the Mammalian Gene Collection (MGC).</title>
        <authorList>
            <consortium name="The MGC Project Team"/>
        </authorList>
    </citation>
    <scope>NUCLEOTIDE SEQUENCE [LARGE SCALE MRNA] OF 196-589 (ISOFORM 1)</scope>
    <source>
        <tissue>Skin</tissue>
    </source>
</reference>
<reference key="5">
    <citation type="journal article" date="2008" name="J. Proteome Res.">
        <title>Combining protein-based IMAC, peptide-based IMAC, and MudPIT for efficient phosphoproteomic analysis.</title>
        <authorList>
            <person name="Cantin G.T."/>
            <person name="Yi W."/>
            <person name="Lu B."/>
            <person name="Park S.K."/>
            <person name="Xu T."/>
            <person name="Lee J.-D."/>
            <person name="Yates J.R. III"/>
        </authorList>
    </citation>
    <scope>IDENTIFICATION BY MASS SPECTROMETRY [LARGE SCALE ANALYSIS]</scope>
    <source>
        <tissue>Cervix carcinoma</tissue>
    </source>
</reference>
<reference key="6">
    <citation type="journal article" date="2008" name="Proc. Natl. Acad. Sci. U.S.A.">
        <title>A quantitative atlas of mitotic phosphorylation.</title>
        <authorList>
            <person name="Dephoure N."/>
            <person name="Zhou C."/>
            <person name="Villen J."/>
            <person name="Beausoleil S.A."/>
            <person name="Bakalarski C.E."/>
            <person name="Elledge S.J."/>
            <person name="Gygi S.P."/>
        </authorList>
    </citation>
    <scope>PHOSPHORYLATION [LARGE SCALE ANALYSIS] AT SER-219</scope>
    <scope>IDENTIFICATION BY MASS SPECTROMETRY [LARGE SCALE ANALYSIS]</scope>
    <source>
        <tissue>Cervix carcinoma</tissue>
    </source>
</reference>
<reference key="7">
    <citation type="journal article" date="2009" name="Anal. Chem.">
        <title>Lys-N and trypsin cover complementary parts of the phosphoproteome in a refined SCX-based approach.</title>
        <authorList>
            <person name="Gauci S."/>
            <person name="Helbig A.O."/>
            <person name="Slijper M."/>
            <person name="Krijgsveld J."/>
            <person name="Heck A.J."/>
            <person name="Mohammed S."/>
        </authorList>
    </citation>
    <scope>IDENTIFICATION BY MASS SPECTROMETRY [LARGE SCALE ANALYSIS]</scope>
</reference>
<reference key="8">
    <citation type="journal article" date="2009" name="Sci. Signal.">
        <title>Quantitative phosphoproteomic analysis of T cell receptor signaling reveals system-wide modulation of protein-protein interactions.</title>
        <authorList>
            <person name="Mayya V."/>
            <person name="Lundgren D.H."/>
            <person name="Hwang S.-I."/>
            <person name="Rezaul K."/>
            <person name="Wu L."/>
            <person name="Eng J.K."/>
            <person name="Rodionov V."/>
            <person name="Han D.K."/>
        </authorList>
    </citation>
    <scope>PHOSPHORYLATION [LARGE SCALE ANALYSIS] AT SER-391</scope>
    <scope>IDENTIFICATION BY MASS SPECTROMETRY [LARGE SCALE ANALYSIS]</scope>
    <source>
        <tissue>Leukemic T-cell</tissue>
    </source>
</reference>
<reference key="9">
    <citation type="journal article" date="2010" name="Sci. Signal.">
        <title>Quantitative phosphoproteomics reveals widespread full phosphorylation site occupancy during mitosis.</title>
        <authorList>
            <person name="Olsen J.V."/>
            <person name="Vermeulen M."/>
            <person name="Santamaria A."/>
            <person name="Kumar C."/>
            <person name="Miller M.L."/>
            <person name="Jensen L.J."/>
            <person name="Gnad F."/>
            <person name="Cox J."/>
            <person name="Jensen T.S."/>
            <person name="Nigg E.A."/>
            <person name="Brunak S."/>
            <person name="Mann M."/>
        </authorList>
    </citation>
    <scope>IDENTIFICATION BY MASS SPECTROMETRY [LARGE SCALE ANALYSIS]</scope>
    <source>
        <tissue>Cervix carcinoma</tissue>
    </source>
</reference>
<reference key="10">
    <citation type="journal article" date="2011" name="Sci. Signal.">
        <title>System-wide temporal characterization of the proteome and phosphoproteome of human embryonic stem cell differentiation.</title>
        <authorList>
            <person name="Rigbolt K.T."/>
            <person name="Prokhorova T.A."/>
            <person name="Akimov V."/>
            <person name="Henningsen J."/>
            <person name="Johansen P.T."/>
            <person name="Kratchmarova I."/>
            <person name="Kassem M."/>
            <person name="Mann M."/>
            <person name="Olsen J.V."/>
            <person name="Blagoev B."/>
        </authorList>
    </citation>
    <scope>IDENTIFICATION BY MASS SPECTROMETRY [LARGE SCALE ANALYSIS]</scope>
</reference>
<reference key="11">
    <citation type="journal article" date="2013" name="J. Proteome Res.">
        <title>Toward a comprehensive characterization of a human cancer cell phosphoproteome.</title>
        <authorList>
            <person name="Zhou H."/>
            <person name="Di Palma S."/>
            <person name="Preisinger C."/>
            <person name="Peng M."/>
            <person name="Polat A.N."/>
            <person name="Heck A.J."/>
            <person name="Mohammed S."/>
        </authorList>
    </citation>
    <scope>PHOSPHORYLATION [LARGE SCALE ANALYSIS] AT SER-10; SER-210; SER-220; SER-273 AND SER-457</scope>
    <scope>IDENTIFICATION BY MASS SPECTROMETRY [LARGE SCALE ANALYSIS]</scope>
    <source>
        <tissue>Cervix carcinoma</tissue>
        <tissue>Erythroleukemia</tissue>
    </source>
</reference>
<reference key="12">
    <citation type="journal article" date="2014" name="J. Proteomics">
        <title>An enzyme assisted RP-RPLC approach for in-depth analysis of human liver phosphoproteome.</title>
        <authorList>
            <person name="Bian Y."/>
            <person name="Song C."/>
            <person name="Cheng K."/>
            <person name="Dong M."/>
            <person name="Wang F."/>
            <person name="Huang J."/>
            <person name="Sun D."/>
            <person name="Wang L."/>
            <person name="Ye M."/>
            <person name="Zou H."/>
        </authorList>
    </citation>
    <scope>IDENTIFICATION BY MASS SPECTROMETRY [LARGE SCALE ANALYSIS]</scope>
    <source>
        <tissue>Liver</tissue>
    </source>
</reference>
<keyword id="KW-0025">Alternative splicing</keyword>
<keyword id="KW-0597">Phosphoprotein</keyword>
<keyword id="KW-1267">Proteomics identification</keyword>
<keyword id="KW-1185">Reference proteome</keyword>
<comment type="interaction">
    <interactant intactId="EBI-3893327">
        <id>Q6P1L5</id>
    </interactant>
    <interactant intactId="EBI-712648">
        <id>O95994</id>
        <label>AGR2</label>
    </interactant>
    <organismsDiffer>false</organismsDiffer>
    <experiments>3</experiments>
</comment>
<comment type="interaction">
    <interactant intactId="EBI-3893327">
        <id>Q6P1L5</id>
    </interactant>
    <interactant intactId="EBI-1044810">
        <id>P24539</id>
        <label>ATP5PB</label>
    </interactant>
    <organismsDiffer>false</organismsDiffer>
    <experiments>3</experiments>
</comment>
<comment type="interaction">
    <interactant intactId="EBI-3893327">
        <id>Q6P1L5</id>
    </interactant>
    <interactant intactId="EBI-10988864">
        <id>P46379-2</id>
        <label>BAG6</label>
    </interactant>
    <organismsDiffer>false</organismsDiffer>
    <experiments>3</experiments>
</comment>
<comment type="interaction">
    <interactant intactId="EBI-3893327">
        <id>Q6P1L5</id>
    </interactant>
    <interactant intactId="EBI-744695">
        <id>Q8N9N5</id>
        <label>BANP</label>
    </interactant>
    <organismsDiffer>false</organismsDiffer>
    <experiments>3</experiments>
</comment>
<comment type="interaction">
    <interactant intactId="EBI-3893327">
        <id>Q6P1L5</id>
    </interactant>
    <interactant intactId="EBI-11524452">
        <id>Q8N9N5-2</id>
        <label>BANP</label>
    </interactant>
    <organismsDiffer>false</organismsDiffer>
    <experiments>4</experiments>
</comment>
<comment type="interaction">
    <interactant intactId="EBI-3893327">
        <id>Q6P1L5</id>
    </interactant>
    <interactant intactId="EBI-1053164">
        <id>O75190</id>
        <label>DNAJB6</label>
    </interactant>
    <organismsDiffer>false</organismsDiffer>
    <experiments>3</experiments>
</comment>
<comment type="interaction">
    <interactant intactId="EBI-3893327">
        <id>Q6P1L5</id>
    </interactant>
    <interactant intactId="EBI-750300">
        <id>Q01658</id>
        <label>DR1</label>
    </interactant>
    <organismsDiffer>false</organismsDiffer>
    <experiments>3</experiments>
</comment>
<comment type="interaction">
    <interactant intactId="EBI-3893327">
        <id>Q6P1L5</id>
    </interactant>
    <interactant intactId="EBI-349105">
        <id>P63167</id>
        <label>DYNLL1</label>
    </interactant>
    <organismsDiffer>false</organismsDiffer>
    <experiments>14</experiments>
</comment>
<comment type="interaction">
    <interactant intactId="EBI-3893327">
        <id>Q6P1L5</id>
    </interactant>
    <interactant intactId="EBI-742371">
        <id>Q96FJ2</id>
        <label>DYNLL2</label>
    </interactant>
    <organismsDiffer>false</organismsDiffer>
    <experiments>9</experiments>
</comment>
<comment type="interaction">
    <interactant intactId="EBI-3893327">
        <id>Q6P1L5</id>
    </interactant>
    <interactant intactId="EBI-9641086">
        <id>P21333-2</id>
        <label>FLNA</label>
    </interactant>
    <organismsDiffer>false</organismsDiffer>
    <experiments>3</experiments>
</comment>
<comment type="interaction">
    <interactant intactId="EBI-3893327">
        <id>Q6P1L5</id>
    </interactant>
    <interactant intactId="EBI-2558325">
        <id>P78333</id>
        <label>GPC5</label>
    </interactant>
    <organismsDiffer>false</organismsDiffer>
    <experiments>3</experiments>
</comment>
<comment type="interaction">
    <interactant intactId="EBI-3893327">
        <id>Q6P1L5</id>
    </interactant>
    <interactant intactId="EBI-1054873">
        <id>Q9Y5Q9</id>
        <label>GTF3C3</label>
    </interactant>
    <organismsDiffer>false</organismsDiffer>
    <experiments>3</experiments>
</comment>
<comment type="interaction">
    <interactant intactId="EBI-3893327">
        <id>Q6P1L5</id>
    </interactant>
    <interactant intactId="EBI-352682">
        <id>P04792</id>
        <label>HSPB1</label>
    </interactant>
    <organismsDiffer>false</organismsDiffer>
    <experiments>3</experiments>
</comment>
<comment type="interaction">
    <interactant intactId="EBI-3893327">
        <id>Q6P1L5</id>
    </interactant>
    <interactant intactId="EBI-6398041">
        <id>Q9UMF0</id>
        <label>ICAM5</label>
    </interactant>
    <organismsDiffer>false</organismsDiffer>
    <experiments>3</experiments>
</comment>
<comment type="interaction">
    <interactant intactId="EBI-3893327">
        <id>Q6P1L5</id>
    </interactant>
    <interactant intactId="EBI-751001">
        <id>Q14145</id>
        <label>KEAP1</label>
    </interactant>
    <organismsDiffer>false</organismsDiffer>
    <experiments>6</experiments>
</comment>
<comment type="interaction">
    <interactant intactId="EBI-3893327">
        <id>Q6P1L5</id>
    </interactant>
    <interactant intactId="EBI-10975473">
        <id>O60333-2</id>
        <label>KIF1B</label>
    </interactant>
    <organismsDiffer>false</organismsDiffer>
    <experiments>3</experiments>
</comment>
<comment type="interaction">
    <interactant intactId="EBI-3893327">
        <id>Q6P1L5</id>
    </interactant>
    <interactant intactId="EBI-948266">
        <id>O14901</id>
        <label>KLF11</label>
    </interactant>
    <organismsDiffer>false</organismsDiffer>
    <experiments>3</experiments>
</comment>
<comment type="interaction">
    <interactant intactId="EBI-3893327">
        <id>Q6P1L5</id>
    </interactant>
    <interactant intactId="EBI-1050743">
        <id>P31153</id>
        <label>MAT2A</label>
    </interactant>
    <organismsDiffer>false</organismsDiffer>
    <experiments>3</experiments>
</comment>
<comment type="interaction">
    <interactant intactId="EBI-3893327">
        <id>Q6P1L5</id>
    </interactant>
    <interactant intactId="EBI-473160">
        <id>Q8N2W9</id>
        <label>PIAS4</label>
    </interactant>
    <organismsDiffer>false</organismsDiffer>
    <experiments>3</experiments>
</comment>
<comment type="interaction">
    <interactant intactId="EBI-3893327">
        <id>Q6P1L5</id>
    </interactant>
    <interactant intactId="EBI-21251460">
        <id>O60260-5</id>
        <label>PRKN</label>
    </interactant>
    <organismsDiffer>false</organismsDiffer>
    <experiments>3</experiments>
</comment>
<comment type="interaction">
    <interactant intactId="EBI-3893327">
        <id>Q6P1L5</id>
    </interactant>
    <interactant intactId="EBI-749195">
        <id>P60891</id>
        <label>PRPS1</label>
    </interactant>
    <organismsDiffer>false</organismsDiffer>
    <experiments>3</experiments>
</comment>
<comment type="interaction">
    <interactant intactId="EBI-3893327">
        <id>Q6P1L5</id>
    </interactant>
    <interactant intactId="EBI-396669">
        <id>Q9Y3C5</id>
        <label>RNF11</label>
    </interactant>
    <organismsDiffer>false</organismsDiffer>
    <experiments>3</experiments>
</comment>
<comment type="interaction">
    <interactant intactId="EBI-3893327">
        <id>Q6P1L5</id>
    </interactant>
    <interactant intactId="EBI-476295">
        <id>P31947</id>
        <label>SFN</label>
    </interactant>
    <organismsDiffer>false</organismsDiffer>
    <experiments>4</experiments>
</comment>
<comment type="interaction">
    <interactant intactId="EBI-3893327">
        <id>Q6P1L5</id>
    </interactant>
    <interactant intactId="EBI-372899">
        <id>Q13148</id>
        <label>TARDBP</label>
    </interactant>
    <organismsDiffer>false</organismsDiffer>
    <experiments>6</experiments>
</comment>
<comment type="interaction">
    <interactant intactId="EBI-3893327">
        <id>Q6P1L5</id>
    </interactant>
    <interactant intactId="EBI-720609">
        <id>O76024</id>
        <label>WFS1</label>
    </interactant>
    <organismsDiffer>false</organismsDiffer>
    <experiments>3</experiments>
</comment>
<comment type="alternative products">
    <event type="alternative splicing"/>
    <isoform>
        <id>Q6P1L5-1</id>
        <name>1</name>
        <sequence type="displayed"/>
    </isoform>
    <isoform>
        <id>Q6P1L5-2</id>
        <name>2</name>
        <sequence type="described" ref="VSP_027729 VSP_027730"/>
    </isoform>
</comment>
<comment type="miscellaneous">
    <text>ALS2CR13 is mapped in the genomic region covering the complete candidate region for Amyotrophic lateral sclerosis 2 (ALS2).</text>
</comment>
<comment type="sequence caution" evidence="4">
    <conflict type="erroneous initiation">
        <sequence resource="EMBL-CDS" id="AAI06907"/>
    </conflict>
    <text>Truncated N-terminus.</text>
</comment>
<comment type="sequence caution" evidence="4">
    <conflict type="erroneous initiation">
        <sequence resource="EMBL-CDS" id="AAI06908"/>
    </conflict>
    <text>Truncated N-terminus.</text>
</comment>
<comment type="sequence caution" evidence="4">
    <conflict type="erroneous gene model prediction">
        <sequence resource="EMBL-CDS" id="AAX76518"/>
    </conflict>
</comment>
<comment type="sequence caution" evidence="4">
    <conflict type="frameshift">
        <sequence resource="EMBL-CDS" id="BAB69023"/>
    </conflict>
</comment>
<comment type="sequence caution" evidence="4">
    <conflict type="miscellaneous discrepancy">
        <sequence resource="EMBL-CDS" id="BAB69023"/>
    </conflict>
    <text>Contaminating sequence. Sequence of unknown origin in the N-terminal part.</text>
</comment>
<comment type="sequence caution" evidence="4">
    <conflict type="erroneous initiation">
        <sequence resource="EMBL-CDS" id="BAC04700"/>
    </conflict>
    <text>Truncated N-terminus.</text>
</comment>
<organism>
    <name type="scientific">Homo sapiens</name>
    <name type="common">Human</name>
    <dbReference type="NCBI Taxonomy" id="9606"/>
    <lineage>
        <taxon>Eukaryota</taxon>
        <taxon>Metazoa</taxon>
        <taxon>Chordata</taxon>
        <taxon>Craniata</taxon>
        <taxon>Vertebrata</taxon>
        <taxon>Euteleostomi</taxon>
        <taxon>Mammalia</taxon>
        <taxon>Eutheria</taxon>
        <taxon>Euarchontoglires</taxon>
        <taxon>Primates</taxon>
        <taxon>Haplorrhini</taxon>
        <taxon>Catarrhini</taxon>
        <taxon>Hominidae</taxon>
        <taxon>Homo</taxon>
    </lineage>
</organism>
<gene>
    <name type="primary">FAM117B</name>
    <name type="synonym">ALS2CR13</name>
</gene>
<evidence type="ECO:0000250" key="1">
    <source>
        <dbReference type="UniProtKB" id="Q3U3E2"/>
    </source>
</evidence>
<evidence type="ECO:0000256" key="2">
    <source>
        <dbReference type="SAM" id="MobiDB-lite"/>
    </source>
</evidence>
<evidence type="ECO:0000303" key="3">
    <source>
    </source>
</evidence>
<evidence type="ECO:0000305" key="4"/>
<evidence type="ECO:0007744" key="5">
    <source>
    </source>
</evidence>
<evidence type="ECO:0007744" key="6">
    <source>
    </source>
</evidence>
<evidence type="ECO:0007744" key="7">
    <source>
    </source>
</evidence>